<protein>
    <recommendedName>
        <fullName>WD repeat-containing protein 55</fullName>
    </recommendedName>
</protein>
<name>WDR55_PONAB</name>
<proteinExistence type="evidence at transcript level"/>
<comment type="function">
    <text evidence="1">Nucleolar protein that acts as a modulator of rRNA synthesis. Plays a central role during organogenesis (By similarity).</text>
</comment>
<comment type="subcellular location">
    <subcellularLocation>
        <location evidence="1">Nucleus</location>
        <location evidence="1">Nucleolus</location>
    </subcellularLocation>
    <subcellularLocation>
        <location evidence="1">Cytoplasm</location>
    </subcellularLocation>
</comment>
<comment type="similarity">
    <text evidence="4">Belongs to the WD repeat WDR55 family.</text>
</comment>
<gene>
    <name type="primary">WDR55</name>
</gene>
<organism>
    <name type="scientific">Pongo abelii</name>
    <name type="common">Sumatran orangutan</name>
    <name type="synonym">Pongo pygmaeus abelii</name>
    <dbReference type="NCBI Taxonomy" id="9601"/>
    <lineage>
        <taxon>Eukaryota</taxon>
        <taxon>Metazoa</taxon>
        <taxon>Chordata</taxon>
        <taxon>Craniata</taxon>
        <taxon>Vertebrata</taxon>
        <taxon>Euteleostomi</taxon>
        <taxon>Mammalia</taxon>
        <taxon>Eutheria</taxon>
        <taxon>Euarchontoglires</taxon>
        <taxon>Primates</taxon>
        <taxon>Haplorrhini</taxon>
        <taxon>Catarrhini</taxon>
        <taxon>Hominidae</taxon>
        <taxon>Pongo</taxon>
    </lineage>
</organism>
<evidence type="ECO:0000250" key="1"/>
<evidence type="ECO:0000250" key="2">
    <source>
        <dbReference type="UniProtKB" id="Q9H6Y2"/>
    </source>
</evidence>
<evidence type="ECO:0000256" key="3">
    <source>
        <dbReference type="SAM" id="MobiDB-lite"/>
    </source>
</evidence>
<evidence type="ECO:0000305" key="4"/>
<dbReference type="EMBL" id="CR859296">
    <property type="protein sequence ID" value="CAH91474.1"/>
    <property type="molecule type" value="mRNA"/>
</dbReference>
<dbReference type="RefSeq" id="NP_001125868.1">
    <property type="nucleotide sequence ID" value="NM_001132396.1"/>
</dbReference>
<dbReference type="SMR" id="Q5R9T6"/>
<dbReference type="FunCoup" id="Q5R9T6">
    <property type="interactions" value="1767"/>
</dbReference>
<dbReference type="STRING" id="9601.ENSPPYP00000017738"/>
<dbReference type="GeneID" id="100172799"/>
<dbReference type="KEGG" id="pon:100172799"/>
<dbReference type="CTD" id="54853"/>
<dbReference type="eggNOG" id="KOG2444">
    <property type="taxonomic scope" value="Eukaryota"/>
</dbReference>
<dbReference type="InParanoid" id="Q5R9T6"/>
<dbReference type="OrthoDB" id="2288928at2759"/>
<dbReference type="Proteomes" id="UP000001595">
    <property type="component" value="Unplaced"/>
</dbReference>
<dbReference type="GO" id="GO:0005737">
    <property type="term" value="C:cytoplasm"/>
    <property type="evidence" value="ECO:0007669"/>
    <property type="project" value="UniProtKB-SubCell"/>
</dbReference>
<dbReference type="GO" id="GO:0005730">
    <property type="term" value="C:nucleolus"/>
    <property type="evidence" value="ECO:0000250"/>
    <property type="project" value="UniProtKB"/>
</dbReference>
<dbReference type="GO" id="GO:0006364">
    <property type="term" value="P:rRNA processing"/>
    <property type="evidence" value="ECO:0000250"/>
    <property type="project" value="UniProtKB"/>
</dbReference>
<dbReference type="FunFam" id="2.130.10.10:FF:000333">
    <property type="entry name" value="WD repeat-containing protein 55"/>
    <property type="match status" value="1"/>
</dbReference>
<dbReference type="FunFam" id="2.130.10.10:FF:000389">
    <property type="entry name" value="WD repeat-containing protein 55"/>
    <property type="match status" value="1"/>
</dbReference>
<dbReference type="Gene3D" id="2.130.10.10">
    <property type="entry name" value="YVTN repeat-like/Quinoprotein amine dehydrogenase"/>
    <property type="match status" value="2"/>
</dbReference>
<dbReference type="InterPro" id="IPR015943">
    <property type="entry name" value="WD40/YVTN_repeat-like_dom_sf"/>
</dbReference>
<dbReference type="InterPro" id="IPR019775">
    <property type="entry name" value="WD40_repeat_CS"/>
</dbReference>
<dbReference type="InterPro" id="IPR036322">
    <property type="entry name" value="WD40_repeat_dom_sf"/>
</dbReference>
<dbReference type="InterPro" id="IPR001680">
    <property type="entry name" value="WD40_rpt"/>
</dbReference>
<dbReference type="InterPro" id="IPR017422">
    <property type="entry name" value="WDR55"/>
</dbReference>
<dbReference type="InterPro" id="IPR050505">
    <property type="entry name" value="WDR55_POC1"/>
</dbReference>
<dbReference type="PANTHER" id="PTHR44019">
    <property type="entry name" value="WD REPEAT-CONTAINING PROTEIN 55"/>
    <property type="match status" value="1"/>
</dbReference>
<dbReference type="PANTHER" id="PTHR44019:SF20">
    <property type="entry name" value="WD REPEAT-CONTAINING PROTEIN 55"/>
    <property type="match status" value="1"/>
</dbReference>
<dbReference type="Pfam" id="PF24796">
    <property type="entry name" value="WDR55"/>
    <property type="match status" value="1"/>
</dbReference>
<dbReference type="PIRSF" id="PIRSF038169">
    <property type="entry name" value="WD_repeat_p55"/>
    <property type="match status" value="1"/>
</dbReference>
<dbReference type="SMART" id="SM00320">
    <property type="entry name" value="WD40"/>
    <property type="match status" value="6"/>
</dbReference>
<dbReference type="SUPFAM" id="SSF50978">
    <property type="entry name" value="WD40 repeat-like"/>
    <property type="match status" value="1"/>
</dbReference>
<dbReference type="PROSITE" id="PS00678">
    <property type="entry name" value="WD_REPEATS_1"/>
    <property type="match status" value="1"/>
</dbReference>
<dbReference type="PROSITE" id="PS50082">
    <property type="entry name" value="WD_REPEATS_2"/>
    <property type="match status" value="2"/>
</dbReference>
<dbReference type="PROSITE" id="PS50294">
    <property type="entry name" value="WD_REPEATS_REGION"/>
    <property type="match status" value="1"/>
</dbReference>
<accession>Q5R9T6</accession>
<sequence>MDRTCEERPAEDGSDEEDPDSMEAPTRIRDTPEDIVLEAPASGLAFHPARDLLAAGDVDGDVFVFSYSCQEGETKELWSSGHHLKACRAVAFSEDGQKLVTVSKDKAIHVLDVEQGRLERRISKAHGAPINSLLLVDENVLATGDDMGGIRLWDQRKEGPLMDMRQHEEYIADMALDPAKKLLLTASGDGCLGVFNIKRRRFELLSEPQSGDLTSVTLMKCGKKVACGSSEGTIYLFNWNGFGATSDRFALRAESIDCMVPVTESLLCTGSTDGVIRAVNILPNRVVGSVGQHTGEPVGELALSHCGRFLASSGHDQRLKFWDMAQLRAVVVDDYRQRKKKGGPLRALSSKTWSTDDFFAGLREEGEDSMAQEEKEETGDDSD</sequence>
<keyword id="KW-0963">Cytoplasm</keyword>
<keyword id="KW-0539">Nucleus</keyword>
<keyword id="KW-0597">Phosphoprotein</keyword>
<keyword id="KW-1185">Reference proteome</keyword>
<keyword id="KW-0677">Repeat</keyword>
<keyword id="KW-0698">rRNA processing</keyword>
<keyword id="KW-0853">WD repeat</keyword>
<reference key="1">
    <citation type="submission" date="2004-11" db="EMBL/GenBank/DDBJ databases">
        <authorList>
            <consortium name="The German cDNA consortium"/>
        </authorList>
    </citation>
    <scope>NUCLEOTIDE SEQUENCE [LARGE SCALE MRNA]</scope>
    <source>
        <tissue>Kidney</tissue>
    </source>
</reference>
<feature type="chain" id="PRO_0000237600" description="WD repeat-containing protein 55">
    <location>
        <begin position="1"/>
        <end position="383"/>
    </location>
</feature>
<feature type="repeat" description="WD 1">
    <location>
        <begin position="36"/>
        <end position="75"/>
    </location>
</feature>
<feature type="repeat" description="WD 2">
    <location>
        <begin position="82"/>
        <end position="121"/>
    </location>
</feature>
<feature type="repeat" description="WD 3">
    <location>
        <begin position="125"/>
        <end position="163"/>
    </location>
</feature>
<feature type="repeat" description="WD 4">
    <location>
        <begin position="166"/>
        <end position="205"/>
    </location>
</feature>
<feature type="repeat" description="WD 5">
    <location>
        <begin position="208"/>
        <end position="247"/>
    </location>
</feature>
<feature type="repeat" description="WD 6">
    <location>
        <begin position="250"/>
        <end position="289"/>
    </location>
</feature>
<feature type="repeat" description="WD 7">
    <location>
        <begin position="293"/>
        <end position="332"/>
    </location>
</feature>
<feature type="region of interest" description="Disordered" evidence="3">
    <location>
        <begin position="1"/>
        <end position="33"/>
    </location>
</feature>
<feature type="region of interest" description="Disordered" evidence="3">
    <location>
        <begin position="362"/>
        <end position="383"/>
    </location>
</feature>
<feature type="compositionally biased region" description="Basic and acidic residues" evidence="3">
    <location>
        <begin position="1"/>
        <end position="11"/>
    </location>
</feature>
<feature type="compositionally biased region" description="Acidic residues" evidence="3">
    <location>
        <begin position="12"/>
        <end position="21"/>
    </location>
</feature>
<feature type="compositionally biased region" description="Acidic residues" evidence="3">
    <location>
        <begin position="365"/>
        <end position="383"/>
    </location>
</feature>
<feature type="modified residue" description="Phosphoserine" evidence="2">
    <location>
        <position position="14"/>
    </location>
</feature>
<feature type="modified residue" description="Phosphoserine" evidence="2">
    <location>
        <position position="354"/>
    </location>
</feature>
<feature type="modified residue" description="Phosphothreonine" evidence="2">
    <location>
        <position position="378"/>
    </location>
</feature>
<feature type="modified residue" description="Phosphoserine" evidence="2">
    <location>
        <position position="382"/>
    </location>
</feature>